<feature type="chain" id="PRO_1000053567" description="Protein GrpE">
    <location>
        <begin position="1"/>
        <end position="187"/>
    </location>
</feature>
<feature type="region of interest" description="Disordered" evidence="2">
    <location>
        <begin position="1"/>
        <end position="23"/>
    </location>
</feature>
<feature type="compositionally biased region" description="Basic and acidic residues" evidence="2">
    <location>
        <begin position="1"/>
        <end position="11"/>
    </location>
</feature>
<keyword id="KW-0143">Chaperone</keyword>
<keyword id="KW-0963">Cytoplasm</keyword>
<keyword id="KW-0346">Stress response</keyword>
<organism>
    <name type="scientific">Chlamydia felis (strain Fe/C-56)</name>
    <name type="common">Chlamydophila felis</name>
    <dbReference type="NCBI Taxonomy" id="264202"/>
    <lineage>
        <taxon>Bacteria</taxon>
        <taxon>Pseudomonadati</taxon>
        <taxon>Chlamydiota</taxon>
        <taxon>Chlamydiia</taxon>
        <taxon>Chlamydiales</taxon>
        <taxon>Chlamydiaceae</taxon>
        <taxon>Chlamydia/Chlamydophila group</taxon>
        <taxon>Chlamydia</taxon>
    </lineage>
</organism>
<comment type="function">
    <text evidence="1">Participates actively in the response to hyperosmotic and heat shock by preventing the aggregation of stress-denatured proteins, in association with DnaK and GrpE. It is the nucleotide exchange factor for DnaK and may function as a thermosensor. Unfolded proteins bind initially to DnaJ; upon interaction with the DnaJ-bound protein, DnaK hydrolyzes its bound ATP, resulting in the formation of a stable complex. GrpE releases ADP from DnaK; ATP binding to DnaK triggers the release of the substrate protein, thus completing the reaction cycle. Several rounds of ATP-dependent interactions between DnaJ, DnaK and GrpE are required for fully efficient folding.</text>
</comment>
<comment type="subunit">
    <text evidence="1">Homodimer.</text>
</comment>
<comment type="subcellular location">
    <subcellularLocation>
        <location evidence="1">Cytoplasm</location>
    </subcellularLocation>
</comment>
<comment type="similarity">
    <text evidence="1">Belongs to the GrpE family.</text>
</comment>
<evidence type="ECO:0000255" key="1">
    <source>
        <dbReference type="HAMAP-Rule" id="MF_01151"/>
    </source>
</evidence>
<evidence type="ECO:0000256" key="2">
    <source>
        <dbReference type="SAM" id="MobiDB-lite"/>
    </source>
</evidence>
<name>GRPE_CHLFF</name>
<accession>Q253K2</accession>
<proteinExistence type="inferred from homology"/>
<protein>
    <recommendedName>
        <fullName evidence="1">Protein GrpE</fullName>
    </recommendedName>
    <alternativeName>
        <fullName evidence="1">HSP-70 cofactor</fullName>
    </alternativeName>
</protein>
<sequence>MTDSSNEHETENPSVPNPDNEIQDLQQEIATLKAELKEKNDKYLMVLAESENARKRMQKERQEMMQYAVENALIDFLVPIESMEKALGFASQMSDEVKNWALGFNMILQQFKQVFEEKGIVEYSSVGQKFNPFLHEAVETEETTKVPEGIIVEEFAKGYKIGDRPIRVAKVKVAKSPAPQEKEEEKK</sequence>
<dbReference type="EMBL" id="AP006861">
    <property type="protein sequence ID" value="BAE81536.1"/>
    <property type="molecule type" value="Genomic_DNA"/>
</dbReference>
<dbReference type="RefSeq" id="WP_011458314.1">
    <property type="nucleotide sequence ID" value="NC_007899.1"/>
</dbReference>
<dbReference type="SMR" id="Q253K2"/>
<dbReference type="STRING" id="264202.CF0764"/>
<dbReference type="KEGG" id="cfe:CF0764"/>
<dbReference type="eggNOG" id="COG0576">
    <property type="taxonomic scope" value="Bacteria"/>
</dbReference>
<dbReference type="HOGENOM" id="CLU_057217_5_2_0"/>
<dbReference type="OrthoDB" id="9812586at2"/>
<dbReference type="Proteomes" id="UP000001260">
    <property type="component" value="Chromosome"/>
</dbReference>
<dbReference type="GO" id="GO:0005737">
    <property type="term" value="C:cytoplasm"/>
    <property type="evidence" value="ECO:0007669"/>
    <property type="project" value="UniProtKB-SubCell"/>
</dbReference>
<dbReference type="GO" id="GO:0000774">
    <property type="term" value="F:adenyl-nucleotide exchange factor activity"/>
    <property type="evidence" value="ECO:0007669"/>
    <property type="project" value="InterPro"/>
</dbReference>
<dbReference type="GO" id="GO:0042803">
    <property type="term" value="F:protein homodimerization activity"/>
    <property type="evidence" value="ECO:0007669"/>
    <property type="project" value="InterPro"/>
</dbReference>
<dbReference type="GO" id="GO:0051087">
    <property type="term" value="F:protein-folding chaperone binding"/>
    <property type="evidence" value="ECO:0007669"/>
    <property type="project" value="InterPro"/>
</dbReference>
<dbReference type="GO" id="GO:0051082">
    <property type="term" value="F:unfolded protein binding"/>
    <property type="evidence" value="ECO:0007669"/>
    <property type="project" value="TreeGrafter"/>
</dbReference>
<dbReference type="GO" id="GO:0006457">
    <property type="term" value="P:protein folding"/>
    <property type="evidence" value="ECO:0007669"/>
    <property type="project" value="InterPro"/>
</dbReference>
<dbReference type="CDD" id="cd00446">
    <property type="entry name" value="GrpE"/>
    <property type="match status" value="1"/>
</dbReference>
<dbReference type="FunFam" id="2.30.22.10:FF:000001">
    <property type="entry name" value="Protein GrpE"/>
    <property type="match status" value="1"/>
</dbReference>
<dbReference type="Gene3D" id="3.90.20.20">
    <property type="match status" value="1"/>
</dbReference>
<dbReference type="Gene3D" id="2.30.22.10">
    <property type="entry name" value="Head domain of nucleotide exchange factor GrpE"/>
    <property type="match status" value="1"/>
</dbReference>
<dbReference type="HAMAP" id="MF_01151">
    <property type="entry name" value="GrpE"/>
    <property type="match status" value="1"/>
</dbReference>
<dbReference type="InterPro" id="IPR000740">
    <property type="entry name" value="GrpE"/>
</dbReference>
<dbReference type="InterPro" id="IPR013805">
    <property type="entry name" value="GrpE_coiled_coil"/>
</dbReference>
<dbReference type="InterPro" id="IPR009012">
    <property type="entry name" value="GrpE_head"/>
</dbReference>
<dbReference type="PANTHER" id="PTHR21237">
    <property type="entry name" value="GRPE PROTEIN"/>
    <property type="match status" value="1"/>
</dbReference>
<dbReference type="PANTHER" id="PTHR21237:SF23">
    <property type="entry name" value="GRPE PROTEIN HOMOLOG, MITOCHONDRIAL"/>
    <property type="match status" value="1"/>
</dbReference>
<dbReference type="Pfam" id="PF01025">
    <property type="entry name" value="GrpE"/>
    <property type="match status" value="1"/>
</dbReference>
<dbReference type="PRINTS" id="PR00773">
    <property type="entry name" value="GRPEPROTEIN"/>
</dbReference>
<dbReference type="SUPFAM" id="SSF58014">
    <property type="entry name" value="Coiled-coil domain of nucleotide exchange factor GrpE"/>
    <property type="match status" value="1"/>
</dbReference>
<dbReference type="SUPFAM" id="SSF51064">
    <property type="entry name" value="Head domain of nucleotide exchange factor GrpE"/>
    <property type="match status" value="1"/>
</dbReference>
<dbReference type="PROSITE" id="PS01071">
    <property type="entry name" value="GRPE"/>
    <property type="match status" value="1"/>
</dbReference>
<reference key="1">
    <citation type="journal article" date="2006" name="DNA Res.">
        <title>Genome sequence of the cat pathogen, Chlamydophila felis.</title>
        <authorList>
            <person name="Azuma Y."/>
            <person name="Hirakawa H."/>
            <person name="Yamashita A."/>
            <person name="Cai Y."/>
            <person name="Rahman M.A."/>
            <person name="Suzuki H."/>
            <person name="Mitaku S."/>
            <person name="Toh H."/>
            <person name="Goto S."/>
            <person name="Murakami T."/>
            <person name="Sugi K."/>
            <person name="Hayashi H."/>
            <person name="Fukushi H."/>
            <person name="Hattori M."/>
            <person name="Kuhara S."/>
            <person name="Shirai M."/>
        </authorList>
    </citation>
    <scope>NUCLEOTIDE SEQUENCE [LARGE SCALE GENOMIC DNA]</scope>
    <source>
        <strain>Fe/C-56</strain>
    </source>
</reference>
<gene>
    <name evidence="1" type="primary">grpE</name>
    <name type="ordered locus">CF0764</name>
</gene>